<reference key="1">
    <citation type="submission" date="2007-11" db="EMBL/GenBank/DDBJ databases">
        <title>Genome sequencing of phylogenetically and phenotypically diverse Coxiella burnetii isolates.</title>
        <authorList>
            <person name="Seshadri R."/>
            <person name="Samuel J.E."/>
        </authorList>
    </citation>
    <scope>NUCLEOTIDE SEQUENCE [LARGE SCALE GENOMIC DNA]</scope>
    <source>
        <strain>RSA 331 / Henzerling II</strain>
    </source>
</reference>
<keyword id="KW-0067">ATP-binding</keyword>
<keyword id="KW-0436">Ligase</keyword>
<keyword id="KW-0460">Magnesium</keyword>
<keyword id="KW-0464">Manganese</keyword>
<keyword id="KW-0479">Metal-binding</keyword>
<keyword id="KW-0547">Nucleotide-binding</keyword>
<keyword id="KW-0648">Protein biosynthesis</keyword>
<sequence>MKIAILSTKQELSSTQRLKEAALARGHKVKIINTLRCYMSLSQEKPTIHYMGKELARYDAVIPRIGASITFYGTAVVRQFEMMGTFCLNSSMSITRSRDKFRSLQFLSRKGIDLPITGFAHSPDDIEDLIQMVGGTPLIIKLIEGTQGIGVVLAETKKAAESVIQAFLGLKVNILIQEFIGETQGRDIRCFVIGNKVVATMQREARPGDFRSNVHRGGTTKLIKITPQEREISINAAKALGLNVAGVDLLRSKRGPLVLEVNSSPGLEGIENITKKDIAGMIIEFIEKNAKPIKAYSRYQG</sequence>
<name>RIMK_COXBR</name>
<feature type="chain" id="PRO_1000087744" description="Probable alpha-L-glutamate ligase">
    <location>
        <begin position="1"/>
        <end position="301"/>
    </location>
</feature>
<feature type="domain" description="ATP-grasp" evidence="1">
    <location>
        <begin position="104"/>
        <end position="287"/>
    </location>
</feature>
<feature type="binding site" evidence="1">
    <location>
        <position position="141"/>
    </location>
    <ligand>
        <name>ATP</name>
        <dbReference type="ChEBI" id="CHEBI:30616"/>
    </ligand>
</feature>
<feature type="binding site" evidence="1">
    <location>
        <begin position="178"/>
        <end position="179"/>
    </location>
    <ligand>
        <name>ATP</name>
        <dbReference type="ChEBI" id="CHEBI:30616"/>
    </ligand>
</feature>
<feature type="binding site" evidence="1">
    <location>
        <position position="187"/>
    </location>
    <ligand>
        <name>ATP</name>
        <dbReference type="ChEBI" id="CHEBI:30616"/>
    </ligand>
</feature>
<feature type="binding site" evidence="1">
    <location>
        <begin position="211"/>
        <end position="213"/>
    </location>
    <ligand>
        <name>ATP</name>
        <dbReference type="ChEBI" id="CHEBI:30616"/>
    </ligand>
</feature>
<feature type="binding site" evidence="1">
    <location>
        <position position="248"/>
    </location>
    <ligand>
        <name>Mg(2+)</name>
        <dbReference type="ChEBI" id="CHEBI:18420"/>
        <label>1</label>
    </ligand>
</feature>
<feature type="binding site" evidence="1">
    <location>
        <position position="248"/>
    </location>
    <ligand>
        <name>Mn(2+)</name>
        <dbReference type="ChEBI" id="CHEBI:29035"/>
        <label>1</label>
    </ligand>
</feature>
<feature type="binding site" evidence="1">
    <location>
        <position position="260"/>
    </location>
    <ligand>
        <name>Mg(2+)</name>
        <dbReference type="ChEBI" id="CHEBI:18420"/>
        <label>1</label>
    </ligand>
</feature>
<feature type="binding site" evidence="1">
    <location>
        <position position="260"/>
    </location>
    <ligand>
        <name>Mg(2+)</name>
        <dbReference type="ChEBI" id="CHEBI:18420"/>
        <label>2</label>
    </ligand>
</feature>
<feature type="binding site" evidence="1">
    <location>
        <position position="260"/>
    </location>
    <ligand>
        <name>Mn(2+)</name>
        <dbReference type="ChEBI" id="CHEBI:29035"/>
        <label>1</label>
    </ligand>
</feature>
<feature type="binding site" evidence="1">
    <location>
        <position position="260"/>
    </location>
    <ligand>
        <name>Mn(2+)</name>
        <dbReference type="ChEBI" id="CHEBI:29035"/>
        <label>2</label>
    </ligand>
</feature>
<feature type="binding site" evidence="1">
    <location>
        <position position="262"/>
    </location>
    <ligand>
        <name>Mg(2+)</name>
        <dbReference type="ChEBI" id="CHEBI:18420"/>
        <label>2</label>
    </ligand>
</feature>
<feature type="binding site" evidence="1">
    <location>
        <position position="262"/>
    </location>
    <ligand>
        <name>Mn(2+)</name>
        <dbReference type="ChEBI" id="CHEBI:29035"/>
        <label>2</label>
    </ligand>
</feature>
<accession>A9N9M9</accession>
<organism>
    <name type="scientific">Coxiella burnetii (strain RSA 331 / Henzerling II)</name>
    <dbReference type="NCBI Taxonomy" id="360115"/>
    <lineage>
        <taxon>Bacteria</taxon>
        <taxon>Pseudomonadati</taxon>
        <taxon>Pseudomonadota</taxon>
        <taxon>Gammaproteobacteria</taxon>
        <taxon>Legionellales</taxon>
        <taxon>Coxiellaceae</taxon>
        <taxon>Coxiella</taxon>
    </lineage>
</organism>
<proteinExistence type="inferred from homology"/>
<evidence type="ECO:0000255" key="1">
    <source>
        <dbReference type="HAMAP-Rule" id="MF_01552"/>
    </source>
</evidence>
<dbReference type="EC" id="6.3.2.-" evidence="1"/>
<dbReference type="EMBL" id="CP000890">
    <property type="protein sequence ID" value="ABX78194.1"/>
    <property type="molecule type" value="Genomic_DNA"/>
</dbReference>
<dbReference type="RefSeq" id="WP_005769646.1">
    <property type="nucleotide sequence ID" value="NC_010117.1"/>
</dbReference>
<dbReference type="SMR" id="A9N9M9"/>
<dbReference type="KEGG" id="cbs:COXBURSA331_A1791"/>
<dbReference type="HOGENOM" id="CLU_054353_0_1_6"/>
<dbReference type="GO" id="GO:0005737">
    <property type="term" value="C:cytoplasm"/>
    <property type="evidence" value="ECO:0007669"/>
    <property type="project" value="TreeGrafter"/>
</dbReference>
<dbReference type="GO" id="GO:0005524">
    <property type="term" value="F:ATP binding"/>
    <property type="evidence" value="ECO:0007669"/>
    <property type="project" value="UniProtKB-UniRule"/>
</dbReference>
<dbReference type="GO" id="GO:0046872">
    <property type="term" value="F:metal ion binding"/>
    <property type="evidence" value="ECO:0007669"/>
    <property type="project" value="UniProtKB-KW"/>
</dbReference>
<dbReference type="GO" id="GO:0018169">
    <property type="term" value="F:ribosomal S6-glutamic acid ligase activity"/>
    <property type="evidence" value="ECO:0007669"/>
    <property type="project" value="TreeGrafter"/>
</dbReference>
<dbReference type="GO" id="GO:0036211">
    <property type="term" value="P:protein modification process"/>
    <property type="evidence" value="ECO:0007669"/>
    <property type="project" value="InterPro"/>
</dbReference>
<dbReference type="GO" id="GO:0009432">
    <property type="term" value="P:SOS response"/>
    <property type="evidence" value="ECO:0007669"/>
    <property type="project" value="TreeGrafter"/>
</dbReference>
<dbReference type="GO" id="GO:0006412">
    <property type="term" value="P:translation"/>
    <property type="evidence" value="ECO:0007669"/>
    <property type="project" value="UniProtKB-KW"/>
</dbReference>
<dbReference type="FunFam" id="3.40.50.20:FF:000004">
    <property type="entry name" value="Probable alpha-L-glutamate ligase"/>
    <property type="match status" value="1"/>
</dbReference>
<dbReference type="FunFam" id="3.30.1490.20:FF:000005">
    <property type="entry name" value="Probable alpha-L-glutamate ligase 1"/>
    <property type="match status" value="1"/>
</dbReference>
<dbReference type="FunFam" id="3.30.470.20:FF:000016">
    <property type="entry name" value="Ribosomal protein S6--L-glutamate ligase"/>
    <property type="match status" value="1"/>
</dbReference>
<dbReference type="Gene3D" id="3.40.50.20">
    <property type="match status" value="1"/>
</dbReference>
<dbReference type="Gene3D" id="3.30.1490.20">
    <property type="entry name" value="ATP-grasp fold, A domain"/>
    <property type="match status" value="1"/>
</dbReference>
<dbReference type="Gene3D" id="3.30.470.20">
    <property type="entry name" value="ATP-grasp fold, B domain"/>
    <property type="match status" value="1"/>
</dbReference>
<dbReference type="HAMAP" id="MF_01552">
    <property type="entry name" value="RimK"/>
    <property type="match status" value="1"/>
</dbReference>
<dbReference type="InterPro" id="IPR011761">
    <property type="entry name" value="ATP-grasp"/>
</dbReference>
<dbReference type="InterPro" id="IPR013651">
    <property type="entry name" value="ATP-grasp_RimK-type"/>
</dbReference>
<dbReference type="InterPro" id="IPR013815">
    <property type="entry name" value="ATP_grasp_subdomain_1"/>
</dbReference>
<dbReference type="InterPro" id="IPR023533">
    <property type="entry name" value="RimK"/>
</dbReference>
<dbReference type="InterPro" id="IPR041107">
    <property type="entry name" value="Rimk_N"/>
</dbReference>
<dbReference type="InterPro" id="IPR004666">
    <property type="entry name" value="Rp_bS6_RimK/Lys_biosynth_LsyX"/>
</dbReference>
<dbReference type="NCBIfam" id="NF007764">
    <property type="entry name" value="PRK10446.1"/>
    <property type="match status" value="1"/>
</dbReference>
<dbReference type="NCBIfam" id="TIGR00768">
    <property type="entry name" value="rimK_fam"/>
    <property type="match status" value="1"/>
</dbReference>
<dbReference type="PANTHER" id="PTHR21621:SF7">
    <property type="entry name" value="RIBOSOMAL PROTEIN BS6--L-GLUTAMATE LIGASE"/>
    <property type="match status" value="1"/>
</dbReference>
<dbReference type="PANTHER" id="PTHR21621">
    <property type="entry name" value="RIBOSOMAL PROTEIN S6 MODIFICATION PROTEIN"/>
    <property type="match status" value="1"/>
</dbReference>
<dbReference type="Pfam" id="PF08443">
    <property type="entry name" value="RimK"/>
    <property type="match status" value="1"/>
</dbReference>
<dbReference type="Pfam" id="PF18030">
    <property type="entry name" value="Rimk_N"/>
    <property type="match status" value="1"/>
</dbReference>
<dbReference type="SUPFAM" id="SSF56059">
    <property type="entry name" value="Glutathione synthetase ATP-binding domain-like"/>
    <property type="match status" value="1"/>
</dbReference>
<dbReference type="PROSITE" id="PS50975">
    <property type="entry name" value="ATP_GRASP"/>
    <property type="match status" value="1"/>
</dbReference>
<protein>
    <recommendedName>
        <fullName evidence="1">Probable alpha-L-glutamate ligase</fullName>
        <ecNumber evidence="1">6.3.2.-</ecNumber>
    </recommendedName>
</protein>
<gene>
    <name evidence="1" type="primary">rimK</name>
    <name type="ordered locus">COXBURSA331_A1791</name>
</gene>
<comment type="cofactor">
    <cofactor evidence="1">
        <name>Mg(2+)</name>
        <dbReference type="ChEBI" id="CHEBI:18420"/>
    </cofactor>
    <cofactor evidence="1">
        <name>Mn(2+)</name>
        <dbReference type="ChEBI" id="CHEBI:29035"/>
    </cofactor>
    <text evidence="1">Binds 2 magnesium or manganese ions per subunit.</text>
</comment>
<comment type="similarity">
    <text evidence="1">Belongs to the RimK family.</text>
</comment>